<name>RRF_CLOTE</name>
<accession>Q895K9</accession>
<dbReference type="EMBL" id="AE015927">
    <property type="protein sequence ID" value="AAO35831.1"/>
    <property type="molecule type" value="Genomic_DNA"/>
</dbReference>
<dbReference type="RefSeq" id="WP_011099493.1">
    <property type="nucleotide sequence ID" value="NC_004557.1"/>
</dbReference>
<dbReference type="SMR" id="Q895K9"/>
<dbReference type="STRING" id="212717.CTC_01264"/>
<dbReference type="GeneID" id="24253638"/>
<dbReference type="KEGG" id="ctc:CTC_01264"/>
<dbReference type="HOGENOM" id="CLU_073981_2_0_9"/>
<dbReference type="OrthoDB" id="9804006at2"/>
<dbReference type="Proteomes" id="UP000001412">
    <property type="component" value="Chromosome"/>
</dbReference>
<dbReference type="GO" id="GO:0005737">
    <property type="term" value="C:cytoplasm"/>
    <property type="evidence" value="ECO:0007669"/>
    <property type="project" value="UniProtKB-SubCell"/>
</dbReference>
<dbReference type="GO" id="GO:0043023">
    <property type="term" value="F:ribosomal large subunit binding"/>
    <property type="evidence" value="ECO:0007669"/>
    <property type="project" value="TreeGrafter"/>
</dbReference>
<dbReference type="GO" id="GO:0006415">
    <property type="term" value="P:translational termination"/>
    <property type="evidence" value="ECO:0007669"/>
    <property type="project" value="UniProtKB-UniRule"/>
</dbReference>
<dbReference type="CDD" id="cd00520">
    <property type="entry name" value="RRF"/>
    <property type="match status" value="1"/>
</dbReference>
<dbReference type="FunFam" id="1.10.132.20:FF:000001">
    <property type="entry name" value="Ribosome-recycling factor"/>
    <property type="match status" value="1"/>
</dbReference>
<dbReference type="FunFam" id="3.30.1360.40:FF:000001">
    <property type="entry name" value="Ribosome-recycling factor"/>
    <property type="match status" value="1"/>
</dbReference>
<dbReference type="Gene3D" id="3.30.1360.40">
    <property type="match status" value="1"/>
</dbReference>
<dbReference type="Gene3D" id="1.10.132.20">
    <property type="entry name" value="Ribosome-recycling factor"/>
    <property type="match status" value="1"/>
</dbReference>
<dbReference type="HAMAP" id="MF_00040">
    <property type="entry name" value="RRF"/>
    <property type="match status" value="1"/>
</dbReference>
<dbReference type="InterPro" id="IPR002661">
    <property type="entry name" value="Ribosome_recyc_fac"/>
</dbReference>
<dbReference type="InterPro" id="IPR023584">
    <property type="entry name" value="Ribosome_recyc_fac_dom"/>
</dbReference>
<dbReference type="InterPro" id="IPR036191">
    <property type="entry name" value="RRF_sf"/>
</dbReference>
<dbReference type="NCBIfam" id="TIGR00496">
    <property type="entry name" value="frr"/>
    <property type="match status" value="1"/>
</dbReference>
<dbReference type="PANTHER" id="PTHR20982:SF3">
    <property type="entry name" value="MITOCHONDRIAL RIBOSOME RECYCLING FACTOR PSEUDO 1"/>
    <property type="match status" value="1"/>
</dbReference>
<dbReference type="PANTHER" id="PTHR20982">
    <property type="entry name" value="RIBOSOME RECYCLING FACTOR"/>
    <property type="match status" value="1"/>
</dbReference>
<dbReference type="Pfam" id="PF01765">
    <property type="entry name" value="RRF"/>
    <property type="match status" value="1"/>
</dbReference>
<dbReference type="SUPFAM" id="SSF55194">
    <property type="entry name" value="Ribosome recycling factor, RRF"/>
    <property type="match status" value="1"/>
</dbReference>
<sequence>MLKEIMNTAEDKMSKALLALKKDLASLKAGRANPAMLDKIEAEYYGTMTPLSQLANISVPEARILQIQPWDKSSLKAIEKAILVSDLGLNPNNDGTIIRLIIPELTEETRRNIVKTVKKYGEDTKIAIRSVRRDGNDKIKDLKSDMSEDDIKKAEEEIQKITDNYVKKVDEMIDIKEKEIMSI</sequence>
<evidence type="ECO:0000255" key="1">
    <source>
        <dbReference type="HAMAP-Rule" id="MF_00040"/>
    </source>
</evidence>
<keyword id="KW-0963">Cytoplasm</keyword>
<keyword id="KW-0648">Protein biosynthesis</keyword>
<keyword id="KW-1185">Reference proteome</keyword>
<organism>
    <name type="scientific">Clostridium tetani (strain Massachusetts / E88)</name>
    <dbReference type="NCBI Taxonomy" id="212717"/>
    <lineage>
        <taxon>Bacteria</taxon>
        <taxon>Bacillati</taxon>
        <taxon>Bacillota</taxon>
        <taxon>Clostridia</taxon>
        <taxon>Eubacteriales</taxon>
        <taxon>Clostridiaceae</taxon>
        <taxon>Clostridium</taxon>
    </lineage>
</organism>
<comment type="function">
    <text evidence="1">Responsible for the release of ribosomes from messenger RNA at the termination of protein biosynthesis. May increase the efficiency of translation by recycling ribosomes from one round of translation to another.</text>
</comment>
<comment type="subcellular location">
    <subcellularLocation>
        <location evidence="1">Cytoplasm</location>
    </subcellularLocation>
</comment>
<comment type="similarity">
    <text evidence="1">Belongs to the RRF family.</text>
</comment>
<reference key="1">
    <citation type="journal article" date="2003" name="Proc. Natl. Acad. Sci. U.S.A.">
        <title>The genome sequence of Clostridium tetani, the causative agent of tetanus disease.</title>
        <authorList>
            <person name="Brueggemann H."/>
            <person name="Baeumer S."/>
            <person name="Fricke W.F."/>
            <person name="Wiezer A."/>
            <person name="Liesegang H."/>
            <person name="Decker I."/>
            <person name="Herzberg C."/>
            <person name="Martinez-Arias R."/>
            <person name="Merkl R."/>
            <person name="Henne A."/>
            <person name="Gottschalk G."/>
        </authorList>
    </citation>
    <scope>NUCLEOTIDE SEQUENCE [LARGE SCALE GENOMIC DNA]</scope>
    <source>
        <strain>Massachusetts / E88</strain>
    </source>
</reference>
<gene>
    <name evidence="1" type="primary">frr</name>
    <name type="ordered locus">CTC_01264</name>
</gene>
<feature type="chain" id="PRO_0000167446" description="Ribosome-recycling factor">
    <location>
        <begin position="1"/>
        <end position="183"/>
    </location>
</feature>
<proteinExistence type="inferred from homology"/>
<protein>
    <recommendedName>
        <fullName evidence="1">Ribosome-recycling factor</fullName>
        <shortName evidence="1">RRF</shortName>
    </recommendedName>
    <alternativeName>
        <fullName evidence="1">Ribosome-releasing factor</fullName>
    </alternativeName>
</protein>